<organism>
    <name type="scientific">Penicillium rubens (strain ATCC 28089 / DSM 1075 / NRRL 1951 / Wisconsin 54-1255)</name>
    <name type="common">Penicillium chrysogenum</name>
    <dbReference type="NCBI Taxonomy" id="500485"/>
    <lineage>
        <taxon>Eukaryota</taxon>
        <taxon>Fungi</taxon>
        <taxon>Dikarya</taxon>
        <taxon>Ascomycota</taxon>
        <taxon>Pezizomycotina</taxon>
        <taxon>Eurotiomycetes</taxon>
        <taxon>Eurotiomycetidae</taxon>
        <taxon>Eurotiales</taxon>
        <taxon>Aspergillaceae</taxon>
        <taxon>Penicillium</taxon>
        <taxon>Penicillium chrysogenum species complex</taxon>
    </lineage>
</organism>
<evidence type="ECO:0000250" key="1">
    <source>
        <dbReference type="UniProtKB" id="Q5BEJ5"/>
    </source>
</evidence>
<evidence type="ECO:0000255" key="2"/>
<evidence type="ECO:0000255" key="3">
    <source>
        <dbReference type="PROSITE-ProRule" id="PRU00498"/>
    </source>
</evidence>
<evidence type="ECO:0000255" key="4">
    <source>
        <dbReference type="PROSITE-ProRule" id="PRU00718"/>
    </source>
</evidence>
<evidence type="ECO:0000269" key="5">
    <source>
    </source>
</evidence>
<evidence type="ECO:0000303" key="6">
    <source>
    </source>
</evidence>
<evidence type="ECO:0000305" key="7"/>
<gene>
    <name evidence="6" type="primary">chyH</name>
    <name type="ORF">Pc21g12590</name>
</gene>
<comment type="function">
    <text evidence="5">FAD-linked oxidoreductase; part of the gene cluster that mediates the biosynthesis of the yellow pigment chrysogine (PubMed:29196288). the NRPS chyA mediates the condensation of anthranilic acid and alanine into the intermediate 2-(2-aminopropanamido)benzoic acid (PubMed:29196288). The remainder of the pathway is highly branched yielding at least 13 chrysogine-related compounds (PubMed:29196288). The malonyl transferase chyE converts 2-(2-aminopropanamido)benzoic acid and 2-(2-aminopropanamido)benzamidine into 2-(2-(2-carboxyacetamido)propanamido)benzoic acid and 3-((1-((2-carbamoylphenyl)amino)-1-oxopropan-2-yl)amino)-3-oxopropanoic acid, respectively (PubMed:29196288). ChyD is an amidase, being responsible for the amidation of the carboxylic acid moiety of 2-(2-aminopropanamido)benzoic acid, 2-(2-(2-carboxyacetamido)propanamido)benzoic acid and 2-(2-((4-amino-1-carboxy-4-oxobutyl)amino)propanamido)benzoic acid (PubMed:29196288). ChyC is involved in the same reactions as ChyD, but plays a more minor role in the amidation reactions compared to chyD (PubMed:29196288). The oxidoreductases chyH and chyM are involved in oxidation reactions that form N-pyruvoylanthranilamide from 2-(2-aminopropanamido)benzamidine and (1-((2-carbamoylphenyl)amino)-1-oxopropan-2-yl)glutamine, respectively (PubMed:29196288). N-pyruvoylanthranilamide is further converted via two further branches in the pathway, yielding chrysogine and additional chrysogine-related coumpounds (PubMed:29196288). Chrysogine is likely formed by a spontaneous ring closure from N-pyruvoylanthranilamide (PubMed:29196288).</text>
</comment>
<comment type="cofactor">
    <cofactor evidence="1">
        <name>FAD</name>
        <dbReference type="ChEBI" id="CHEBI:57692"/>
    </cofactor>
</comment>
<comment type="pathway">
    <text evidence="5">Pigment biosynthesis.</text>
</comment>
<comment type="disruption phenotype">
    <text evidence="5">Impairs the production of N-pyruvoylanthranilamide ans downstream compounds (PubMed:29196288).</text>
</comment>
<comment type="similarity">
    <text evidence="7">Belongs to the oxygen-dependent FAD-linked oxidoreductase family.</text>
</comment>
<reference key="1">
    <citation type="journal article" date="2008" name="Nat. Biotechnol.">
        <title>Genome sequencing and analysis of the filamentous fungus Penicillium chrysogenum.</title>
        <authorList>
            <person name="van den Berg M.A."/>
            <person name="Albang R."/>
            <person name="Albermann K."/>
            <person name="Badger J.H."/>
            <person name="Daran J.-M."/>
            <person name="Driessen A.J.M."/>
            <person name="Garcia-Estrada C."/>
            <person name="Fedorova N.D."/>
            <person name="Harris D.M."/>
            <person name="Heijne W.H.M."/>
            <person name="Joardar V.S."/>
            <person name="Kiel J.A.K.W."/>
            <person name="Kovalchuk A."/>
            <person name="Martin J.F."/>
            <person name="Nierman W.C."/>
            <person name="Nijland J.G."/>
            <person name="Pronk J.T."/>
            <person name="Roubos J.A."/>
            <person name="van der Klei I.J."/>
            <person name="van Peij N.N.M.E."/>
            <person name="Veenhuis M."/>
            <person name="von Doehren H."/>
            <person name="Wagner C."/>
            <person name="Wortman J.R."/>
            <person name="Bovenberg R.A.L."/>
        </authorList>
    </citation>
    <scope>NUCLEOTIDE SEQUENCE [LARGE SCALE GENOMIC DNA]</scope>
    <source>
        <strain>ATCC 28089 / DSM 1075 / NRRL 1951 / Wisconsin 54-1255</strain>
    </source>
</reference>
<reference key="2">
    <citation type="journal article" date="2017" name="Appl. Environ. Microbiol.">
        <title>Elucidation of the biosynthetic pathway for the production of the pigment chrysogine by Penicillium chrysogenum.</title>
        <authorList>
            <person name="Viggiano A."/>
            <person name="Salo O."/>
            <person name="Ali H."/>
            <person name="Szymanski W."/>
            <person name="Lankhorst P.P."/>
            <person name="Nygaard Y."/>
            <person name="Bovenberg R.A.L."/>
            <person name="Driessen A.J.M."/>
        </authorList>
    </citation>
    <scope>FUNCTION</scope>
    <scope>DISRUPTION PHENOTYPE</scope>
</reference>
<feature type="signal peptide" evidence="2">
    <location>
        <begin position="1"/>
        <end position="20"/>
    </location>
</feature>
<feature type="chain" id="PRO_5002845783" description="FAD-linked oxidoreductase chyH">
    <location>
        <begin position="21"/>
        <end position="500"/>
    </location>
</feature>
<feature type="domain" description="FAD-binding PCMH-type" evidence="4">
    <location>
        <begin position="65"/>
        <end position="235"/>
    </location>
</feature>
<feature type="glycosylation site" description="N-linked (GlcNAc...) asparagine" evidence="3">
    <location>
        <position position="199"/>
    </location>
</feature>
<feature type="glycosylation site" description="N-linked (GlcNAc...) asparagine" evidence="3">
    <location>
        <position position="266"/>
    </location>
</feature>
<feature type="glycosylation site" description="N-linked (GlcNAc...) asparagine" evidence="3">
    <location>
        <position position="275"/>
    </location>
</feature>
<feature type="glycosylation site" description="N-linked (GlcNAc...) asparagine" evidence="3">
    <location>
        <position position="383"/>
    </location>
</feature>
<dbReference type="EC" id="1.-.-.-" evidence="5"/>
<dbReference type="EMBL" id="AM920436">
    <property type="protein sequence ID" value="CAP96156.1"/>
    <property type="molecule type" value="Genomic_DNA"/>
</dbReference>
<dbReference type="RefSeq" id="XP_002568286.1">
    <property type="nucleotide sequence ID" value="XM_002568240.1"/>
</dbReference>
<dbReference type="SMR" id="B6HLP5"/>
<dbReference type="STRING" id="500485.B6HLP5"/>
<dbReference type="GlyCosmos" id="B6HLP5">
    <property type="glycosylation" value="4 sites, No reported glycans"/>
</dbReference>
<dbReference type="GeneID" id="8306445"/>
<dbReference type="KEGG" id="pcs:N7525_007827"/>
<dbReference type="VEuPathDB" id="FungiDB:PCH_Pc21g12590"/>
<dbReference type="eggNOG" id="ENOG502SJ3M">
    <property type="taxonomic scope" value="Eukaryota"/>
</dbReference>
<dbReference type="HOGENOM" id="CLU_018354_0_1_1"/>
<dbReference type="OMA" id="PTDLINW"/>
<dbReference type="OrthoDB" id="9996127at2759"/>
<dbReference type="BioCyc" id="PCHR:PC21G12590-MONOMER"/>
<dbReference type="Proteomes" id="UP000000724">
    <property type="component" value="Contig Pc00c21"/>
</dbReference>
<dbReference type="GO" id="GO:0071949">
    <property type="term" value="F:FAD binding"/>
    <property type="evidence" value="ECO:0007669"/>
    <property type="project" value="InterPro"/>
</dbReference>
<dbReference type="GO" id="GO:0016491">
    <property type="term" value="F:oxidoreductase activity"/>
    <property type="evidence" value="ECO:0007669"/>
    <property type="project" value="UniProtKB-KW"/>
</dbReference>
<dbReference type="Gene3D" id="3.30.465.10">
    <property type="match status" value="1"/>
</dbReference>
<dbReference type="Gene3D" id="3.40.462.20">
    <property type="match status" value="1"/>
</dbReference>
<dbReference type="InterPro" id="IPR012951">
    <property type="entry name" value="BBE"/>
</dbReference>
<dbReference type="InterPro" id="IPR016166">
    <property type="entry name" value="FAD-bd_PCMH"/>
</dbReference>
<dbReference type="InterPro" id="IPR036318">
    <property type="entry name" value="FAD-bd_PCMH-like_sf"/>
</dbReference>
<dbReference type="InterPro" id="IPR016169">
    <property type="entry name" value="FAD-bd_PCMH_sub2"/>
</dbReference>
<dbReference type="InterPro" id="IPR050416">
    <property type="entry name" value="FAD-linked_Oxidoreductase"/>
</dbReference>
<dbReference type="InterPro" id="IPR006094">
    <property type="entry name" value="Oxid_FAD_bind_N"/>
</dbReference>
<dbReference type="PANTHER" id="PTHR42973">
    <property type="entry name" value="BINDING OXIDOREDUCTASE, PUTATIVE (AFU_ORTHOLOGUE AFUA_1G17690)-RELATED"/>
    <property type="match status" value="1"/>
</dbReference>
<dbReference type="PANTHER" id="PTHR42973:SF9">
    <property type="entry name" value="FAD-BINDING PCMH-TYPE DOMAIN-CONTAINING PROTEIN-RELATED"/>
    <property type="match status" value="1"/>
</dbReference>
<dbReference type="Pfam" id="PF08031">
    <property type="entry name" value="BBE"/>
    <property type="match status" value="1"/>
</dbReference>
<dbReference type="Pfam" id="PF01565">
    <property type="entry name" value="FAD_binding_4"/>
    <property type="match status" value="1"/>
</dbReference>
<dbReference type="SUPFAM" id="SSF56176">
    <property type="entry name" value="FAD-binding/transporter-associated domain-like"/>
    <property type="match status" value="1"/>
</dbReference>
<dbReference type="PROSITE" id="PS51387">
    <property type="entry name" value="FAD_PCMH"/>
    <property type="match status" value="1"/>
</dbReference>
<name>CHYH_PENRW</name>
<keyword id="KW-0274">FAD</keyword>
<keyword id="KW-0285">Flavoprotein</keyword>
<keyword id="KW-0325">Glycoprotein</keyword>
<keyword id="KW-0560">Oxidoreductase</keyword>
<keyword id="KW-1185">Reference proteome</keyword>
<keyword id="KW-0732">Signal</keyword>
<accession>B6HLP5</accession>
<protein>
    <recommendedName>
        <fullName evidence="6">FAD-linked oxidoreductase chyH</fullName>
        <ecNumber evidence="5">1.-.-.-</ecNumber>
    </recommendedName>
    <alternativeName>
        <fullName evidence="6">Chrysogine biosynthesis cluster protein H</fullName>
    </alternativeName>
</protein>
<proteinExistence type="inferred from homology"/>
<sequence length="500" mass="54521">MRLQAVTAVAAWAVASACQSLPGTRTIWSRDADYKELSEKLSPSAKAYYPGSDEFEKANTRWSNLEVPTVNIVIVPGNENDVVETVKFANKKGLPFLAWNSAHGAMTTLGQMDSGIEIYLDQLSGVEIAEDGKTVTIAGGTKSKLVTDTLWAAGKQTVTGACECVGYIGPALGGGHGWLQGRHGTIGDQFESANIVLANGTLTSIDSSSDLWWAIKGAGHNFGIVTSVTSKTYDIEHKDWAIEILTFSGSKVVELYEAVNTHLLKNGTQPTDLINWSYWVNVPSADANNPVIQILIIQEGVNTVDSAYTTPFHSLSPITKEAHSGSYTDLAKWVGITTTDEPCQKTGAMNPRFPIYLETYNPQAQKKAFELFSDAIRGDSIFNGSLFAFDGYSTQGVRAIDEKSTAFAFRNQNVLTAPLISYMPDGPELDEKVAKLGNQLRQILHEGTGREHIPAYVNYANGDEGPEQWYGSESWRQSKLQSLKKKYDPNGMFSFYGPIA</sequence>